<organism>
    <name type="scientific">Methylovorus sp. (strain SS1 / DSM 11726)</name>
    <dbReference type="NCBI Taxonomy" id="81683"/>
    <lineage>
        <taxon>Bacteria</taxon>
        <taxon>Pseudomonadati</taxon>
        <taxon>Pseudomonadota</taxon>
        <taxon>Betaproteobacteria</taxon>
        <taxon>Nitrosomonadales</taxon>
        <taxon>Methylophilaceae</taxon>
        <taxon>Methylovorus</taxon>
    </lineage>
</organism>
<keyword id="KW-0143">Chaperone</keyword>
<keyword id="KW-0963">Cytoplasm</keyword>
<keyword id="KW-0235">DNA replication</keyword>
<keyword id="KW-0479">Metal-binding</keyword>
<keyword id="KW-0677">Repeat</keyword>
<keyword id="KW-0346">Stress response</keyword>
<keyword id="KW-0862">Zinc</keyword>
<keyword id="KW-0863">Zinc-finger</keyword>
<comment type="function">
    <text evidence="1">Participates actively in the response to hyperosmotic and heat shock by preventing the aggregation of stress-denatured proteins and by disaggregating proteins, also in an autonomous, DnaK-independent fashion. Unfolded proteins bind initially to DnaJ; upon interaction with the DnaJ-bound protein, DnaK hydrolyzes its bound ATP, resulting in the formation of a stable complex. GrpE releases ADP from DnaK; ATP binding to DnaK triggers the release of the substrate protein, thus completing the reaction cycle. Several rounds of ATP-dependent interactions between DnaJ, DnaK and GrpE are required for fully efficient folding. Also involved, together with DnaK and GrpE, in the DNA replication of plasmids through activation of initiation proteins.</text>
</comment>
<comment type="cofactor">
    <cofactor evidence="1">
        <name>Zn(2+)</name>
        <dbReference type="ChEBI" id="CHEBI:29105"/>
    </cofactor>
    <text evidence="1">Binds 2 Zn(2+) ions per monomer.</text>
</comment>
<comment type="subunit">
    <text evidence="1">Homodimer.</text>
</comment>
<comment type="subcellular location">
    <subcellularLocation>
        <location evidence="1">Cytoplasm</location>
    </subcellularLocation>
</comment>
<comment type="domain">
    <text evidence="1">The J domain is necessary and sufficient to stimulate DnaK ATPase activity. Zinc center 1 plays an important role in the autonomous, DnaK-independent chaperone activity of DnaJ. Zinc center 2 is essential for interaction with DnaK and for DnaJ activity.</text>
</comment>
<comment type="similarity">
    <text evidence="1">Belongs to the DnaJ family.</text>
</comment>
<gene>
    <name evidence="1" type="primary">dnaJ</name>
</gene>
<feature type="chain" id="PRO_0000070819" description="Chaperone protein DnaJ">
    <location>
        <begin position="1"/>
        <end position="371"/>
    </location>
</feature>
<feature type="domain" description="J" evidence="1">
    <location>
        <begin position="5"/>
        <end position="70"/>
    </location>
</feature>
<feature type="repeat" description="CXXCXGXG motif">
    <location>
        <begin position="145"/>
        <end position="152"/>
    </location>
</feature>
<feature type="repeat" description="CXXCXGXG motif">
    <location>
        <begin position="162"/>
        <end position="169"/>
    </location>
</feature>
<feature type="repeat" description="CXXCXGXG motif">
    <location>
        <begin position="184"/>
        <end position="191"/>
    </location>
</feature>
<feature type="repeat" description="CXXCXGXG motif">
    <location>
        <begin position="198"/>
        <end position="205"/>
    </location>
</feature>
<feature type="zinc finger region" description="CR-type" evidence="1">
    <location>
        <begin position="132"/>
        <end position="210"/>
    </location>
</feature>
<feature type="region of interest" description="Disordered" evidence="2">
    <location>
        <begin position="31"/>
        <end position="52"/>
    </location>
</feature>
<feature type="compositionally biased region" description="Basic and acidic residues" evidence="2">
    <location>
        <begin position="32"/>
        <end position="52"/>
    </location>
</feature>
<feature type="binding site" evidence="1">
    <location>
        <position position="145"/>
    </location>
    <ligand>
        <name>Zn(2+)</name>
        <dbReference type="ChEBI" id="CHEBI:29105"/>
        <label>1</label>
    </ligand>
</feature>
<feature type="binding site" evidence="1">
    <location>
        <position position="148"/>
    </location>
    <ligand>
        <name>Zn(2+)</name>
        <dbReference type="ChEBI" id="CHEBI:29105"/>
        <label>1</label>
    </ligand>
</feature>
<feature type="binding site" evidence="1">
    <location>
        <position position="162"/>
    </location>
    <ligand>
        <name>Zn(2+)</name>
        <dbReference type="ChEBI" id="CHEBI:29105"/>
        <label>2</label>
    </ligand>
</feature>
<feature type="binding site" evidence="1">
    <location>
        <position position="165"/>
    </location>
    <ligand>
        <name>Zn(2+)</name>
        <dbReference type="ChEBI" id="CHEBI:29105"/>
        <label>2</label>
    </ligand>
</feature>
<feature type="binding site" evidence="1">
    <location>
        <position position="184"/>
    </location>
    <ligand>
        <name>Zn(2+)</name>
        <dbReference type="ChEBI" id="CHEBI:29105"/>
        <label>2</label>
    </ligand>
</feature>
<feature type="binding site" evidence="1">
    <location>
        <position position="187"/>
    </location>
    <ligand>
        <name>Zn(2+)</name>
        <dbReference type="ChEBI" id="CHEBI:29105"/>
        <label>2</label>
    </ligand>
</feature>
<feature type="binding site" evidence="1">
    <location>
        <position position="198"/>
    </location>
    <ligand>
        <name>Zn(2+)</name>
        <dbReference type="ChEBI" id="CHEBI:29105"/>
        <label>1</label>
    </ligand>
</feature>
<feature type="binding site" evidence="1">
    <location>
        <position position="201"/>
    </location>
    <ligand>
        <name>Zn(2+)</name>
        <dbReference type="ChEBI" id="CHEBI:29105"/>
        <label>1</label>
    </ligand>
</feature>
<evidence type="ECO:0000255" key="1">
    <source>
        <dbReference type="HAMAP-Rule" id="MF_01152"/>
    </source>
</evidence>
<evidence type="ECO:0000256" key="2">
    <source>
        <dbReference type="SAM" id="MobiDB-lite"/>
    </source>
</evidence>
<reference key="1">
    <citation type="submission" date="1998-11" db="EMBL/GenBank/DDBJ databases">
        <title>grpE, dnaK, and dnaJ genes of Methylovorus sp. strain SS1 DSM11726.</title>
        <authorList>
            <person name="Eom C.Y."/>
            <person name="Kim Y.M."/>
        </authorList>
    </citation>
    <scope>NUCLEOTIDE SEQUENCE [GENOMIC DNA]</scope>
</reference>
<name>DNAJ_METSS</name>
<protein>
    <recommendedName>
        <fullName evidence="1">Chaperone protein DnaJ</fullName>
    </recommendedName>
</protein>
<sequence length="371" mass="41052">MAKKDYYEVLGVNRDASDEEIKKSYRKLAMKYHPDRNPDNPKAEESFKEAKEAYEVLSDEQKRAAYDQYGHAGVDPSAGPGPRQGFGNFADAFGDIFGDIFGGGGGNRRSNVYRGADLRYNMEISLEDAARRTETKIRIPVMSECETCHGSGARPGTQPVTCTTCGGHGQVRMQQGFFSVQQTCPKCHGSGKMVKEPCPSCQGAGRVKKHKTLSVKIPAGVDEGDRIRLSGEGERVNGGPPRDLYVVVHLKQHDIFQRDGGNLHCEMPISFTTAALGGEIEIPTLDGHAKMKIPPETQTGATFRLRGKGIKPLRTNDPGDLMCHVVVETPIKLTERQKELLREMEEINLQDSDKHSPRAKGWMDKVKDFFQ</sequence>
<dbReference type="EMBL" id="AF106835">
    <property type="protein sequence ID" value="AAC95379.1"/>
    <property type="molecule type" value="Genomic_DNA"/>
</dbReference>
<dbReference type="SMR" id="Q9ZFC5"/>
<dbReference type="GO" id="GO:0005737">
    <property type="term" value="C:cytoplasm"/>
    <property type="evidence" value="ECO:0007669"/>
    <property type="project" value="UniProtKB-SubCell"/>
</dbReference>
<dbReference type="GO" id="GO:0005524">
    <property type="term" value="F:ATP binding"/>
    <property type="evidence" value="ECO:0007669"/>
    <property type="project" value="InterPro"/>
</dbReference>
<dbReference type="GO" id="GO:0031072">
    <property type="term" value="F:heat shock protein binding"/>
    <property type="evidence" value="ECO:0007669"/>
    <property type="project" value="InterPro"/>
</dbReference>
<dbReference type="GO" id="GO:0051082">
    <property type="term" value="F:unfolded protein binding"/>
    <property type="evidence" value="ECO:0007669"/>
    <property type="project" value="UniProtKB-UniRule"/>
</dbReference>
<dbReference type="GO" id="GO:0008270">
    <property type="term" value="F:zinc ion binding"/>
    <property type="evidence" value="ECO:0007669"/>
    <property type="project" value="UniProtKB-UniRule"/>
</dbReference>
<dbReference type="GO" id="GO:0051085">
    <property type="term" value="P:chaperone cofactor-dependent protein refolding"/>
    <property type="evidence" value="ECO:0007669"/>
    <property type="project" value="TreeGrafter"/>
</dbReference>
<dbReference type="GO" id="GO:0006260">
    <property type="term" value="P:DNA replication"/>
    <property type="evidence" value="ECO:0007669"/>
    <property type="project" value="UniProtKB-KW"/>
</dbReference>
<dbReference type="GO" id="GO:0042026">
    <property type="term" value="P:protein refolding"/>
    <property type="evidence" value="ECO:0007669"/>
    <property type="project" value="TreeGrafter"/>
</dbReference>
<dbReference type="GO" id="GO:0009408">
    <property type="term" value="P:response to heat"/>
    <property type="evidence" value="ECO:0007669"/>
    <property type="project" value="InterPro"/>
</dbReference>
<dbReference type="CDD" id="cd06257">
    <property type="entry name" value="DnaJ"/>
    <property type="match status" value="1"/>
</dbReference>
<dbReference type="CDD" id="cd10747">
    <property type="entry name" value="DnaJ_C"/>
    <property type="match status" value="1"/>
</dbReference>
<dbReference type="CDD" id="cd10719">
    <property type="entry name" value="DnaJ_zf"/>
    <property type="match status" value="1"/>
</dbReference>
<dbReference type="FunFam" id="1.10.287.110:FF:000034">
    <property type="entry name" value="Chaperone protein DnaJ"/>
    <property type="match status" value="1"/>
</dbReference>
<dbReference type="FunFam" id="2.10.230.10:FF:000002">
    <property type="entry name" value="Molecular chaperone DnaJ"/>
    <property type="match status" value="1"/>
</dbReference>
<dbReference type="FunFam" id="2.60.260.20:FF:000004">
    <property type="entry name" value="Molecular chaperone DnaJ"/>
    <property type="match status" value="1"/>
</dbReference>
<dbReference type="Gene3D" id="1.10.287.110">
    <property type="entry name" value="DnaJ domain"/>
    <property type="match status" value="1"/>
</dbReference>
<dbReference type="Gene3D" id="2.10.230.10">
    <property type="entry name" value="Heat shock protein DnaJ, cysteine-rich domain"/>
    <property type="match status" value="1"/>
</dbReference>
<dbReference type="Gene3D" id="2.60.260.20">
    <property type="entry name" value="Urease metallochaperone UreE, N-terminal domain"/>
    <property type="match status" value="2"/>
</dbReference>
<dbReference type="HAMAP" id="MF_01152">
    <property type="entry name" value="DnaJ"/>
    <property type="match status" value="1"/>
</dbReference>
<dbReference type="InterPro" id="IPR012724">
    <property type="entry name" value="DnaJ"/>
</dbReference>
<dbReference type="InterPro" id="IPR002939">
    <property type="entry name" value="DnaJ_C"/>
</dbReference>
<dbReference type="InterPro" id="IPR001623">
    <property type="entry name" value="DnaJ_domain"/>
</dbReference>
<dbReference type="InterPro" id="IPR018253">
    <property type="entry name" value="DnaJ_domain_CS"/>
</dbReference>
<dbReference type="InterPro" id="IPR008971">
    <property type="entry name" value="HSP40/DnaJ_pept-bd"/>
</dbReference>
<dbReference type="InterPro" id="IPR001305">
    <property type="entry name" value="HSP_DnaJ_Cys-rich_dom"/>
</dbReference>
<dbReference type="InterPro" id="IPR036410">
    <property type="entry name" value="HSP_DnaJ_Cys-rich_dom_sf"/>
</dbReference>
<dbReference type="InterPro" id="IPR036869">
    <property type="entry name" value="J_dom_sf"/>
</dbReference>
<dbReference type="NCBIfam" id="TIGR02349">
    <property type="entry name" value="DnaJ_bact"/>
    <property type="match status" value="1"/>
</dbReference>
<dbReference type="NCBIfam" id="NF008035">
    <property type="entry name" value="PRK10767.1"/>
    <property type="match status" value="1"/>
</dbReference>
<dbReference type="PANTHER" id="PTHR43096:SF48">
    <property type="entry name" value="CHAPERONE PROTEIN DNAJ"/>
    <property type="match status" value="1"/>
</dbReference>
<dbReference type="PANTHER" id="PTHR43096">
    <property type="entry name" value="DNAJ HOMOLOG 1, MITOCHONDRIAL-RELATED"/>
    <property type="match status" value="1"/>
</dbReference>
<dbReference type="Pfam" id="PF00226">
    <property type="entry name" value="DnaJ"/>
    <property type="match status" value="1"/>
</dbReference>
<dbReference type="Pfam" id="PF01556">
    <property type="entry name" value="DnaJ_C"/>
    <property type="match status" value="1"/>
</dbReference>
<dbReference type="Pfam" id="PF00684">
    <property type="entry name" value="DnaJ_CXXCXGXG"/>
    <property type="match status" value="1"/>
</dbReference>
<dbReference type="PRINTS" id="PR00625">
    <property type="entry name" value="JDOMAIN"/>
</dbReference>
<dbReference type="SMART" id="SM00271">
    <property type="entry name" value="DnaJ"/>
    <property type="match status" value="1"/>
</dbReference>
<dbReference type="SUPFAM" id="SSF46565">
    <property type="entry name" value="Chaperone J-domain"/>
    <property type="match status" value="1"/>
</dbReference>
<dbReference type="SUPFAM" id="SSF57938">
    <property type="entry name" value="DnaJ/Hsp40 cysteine-rich domain"/>
    <property type="match status" value="1"/>
</dbReference>
<dbReference type="SUPFAM" id="SSF49493">
    <property type="entry name" value="HSP40/DnaJ peptide-binding domain"/>
    <property type="match status" value="2"/>
</dbReference>
<dbReference type="PROSITE" id="PS00636">
    <property type="entry name" value="DNAJ_1"/>
    <property type="match status" value="1"/>
</dbReference>
<dbReference type="PROSITE" id="PS50076">
    <property type="entry name" value="DNAJ_2"/>
    <property type="match status" value="1"/>
</dbReference>
<dbReference type="PROSITE" id="PS51188">
    <property type="entry name" value="ZF_CR"/>
    <property type="match status" value="1"/>
</dbReference>
<proteinExistence type="inferred from homology"/>
<accession>Q9ZFC5</accession>